<evidence type="ECO:0000255" key="1">
    <source>
        <dbReference type="HAMAP-Rule" id="MF_00003"/>
    </source>
</evidence>
<protein>
    <recommendedName>
        <fullName evidence="1">Ribosome-binding factor A</fullName>
    </recommendedName>
</protein>
<proteinExistence type="inferred from homology"/>
<sequence length="122" mass="13945">MAVTARNQRVAEEMKKEIARIIRDEVKDPRLEAGLVSVTGVELSNDRHYAKVYVSIYGDEEARNQAMEGLARATSFIRREIGQRLSLRYTPEITFKLDVSIEHGDHINRLLARVRAGEYADE</sequence>
<dbReference type="EMBL" id="CP000232">
    <property type="protein sequence ID" value="ABC19365.1"/>
    <property type="molecule type" value="Genomic_DNA"/>
</dbReference>
<dbReference type="RefSeq" id="YP_429908.1">
    <property type="nucleotide sequence ID" value="NC_007644.1"/>
</dbReference>
<dbReference type="SMR" id="Q2RJM4"/>
<dbReference type="STRING" id="264732.Moth_1051"/>
<dbReference type="EnsemblBacteria" id="ABC19365">
    <property type="protein sequence ID" value="ABC19365"/>
    <property type="gene ID" value="Moth_1051"/>
</dbReference>
<dbReference type="KEGG" id="mta:Moth_1051"/>
<dbReference type="PATRIC" id="fig|264732.11.peg.1131"/>
<dbReference type="eggNOG" id="COG0858">
    <property type="taxonomic scope" value="Bacteria"/>
</dbReference>
<dbReference type="HOGENOM" id="CLU_089475_6_3_9"/>
<dbReference type="OrthoDB" id="307788at2"/>
<dbReference type="GO" id="GO:0005829">
    <property type="term" value="C:cytosol"/>
    <property type="evidence" value="ECO:0007669"/>
    <property type="project" value="TreeGrafter"/>
</dbReference>
<dbReference type="GO" id="GO:0043024">
    <property type="term" value="F:ribosomal small subunit binding"/>
    <property type="evidence" value="ECO:0007669"/>
    <property type="project" value="TreeGrafter"/>
</dbReference>
<dbReference type="GO" id="GO:0030490">
    <property type="term" value="P:maturation of SSU-rRNA"/>
    <property type="evidence" value="ECO:0007669"/>
    <property type="project" value="UniProtKB-UniRule"/>
</dbReference>
<dbReference type="Gene3D" id="3.30.300.20">
    <property type="match status" value="1"/>
</dbReference>
<dbReference type="HAMAP" id="MF_00003">
    <property type="entry name" value="RbfA"/>
    <property type="match status" value="1"/>
</dbReference>
<dbReference type="InterPro" id="IPR015946">
    <property type="entry name" value="KH_dom-like_a/b"/>
</dbReference>
<dbReference type="InterPro" id="IPR000238">
    <property type="entry name" value="RbfA"/>
</dbReference>
<dbReference type="InterPro" id="IPR023799">
    <property type="entry name" value="RbfA_dom_sf"/>
</dbReference>
<dbReference type="InterPro" id="IPR020053">
    <property type="entry name" value="Ribosome-bd_factorA_CS"/>
</dbReference>
<dbReference type="NCBIfam" id="TIGR00082">
    <property type="entry name" value="rbfA"/>
    <property type="match status" value="1"/>
</dbReference>
<dbReference type="PANTHER" id="PTHR33515">
    <property type="entry name" value="RIBOSOME-BINDING FACTOR A, CHLOROPLASTIC-RELATED"/>
    <property type="match status" value="1"/>
</dbReference>
<dbReference type="PANTHER" id="PTHR33515:SF1">
    <property type="entry name" value="RIBOSOME-BINDING FACTOR A, CHLOROPLASTIC-RELATED"/>
    <property type="match status" value="1"/>
</dbReference>
<dbReference type="Pfam" id="PF02033">
    <property type="entry name" value="RBFA"/>
    <property type="match status" value="1"/>
</dbReference>
<dbReference type="SUPFAM" id="SSF89919">
    <property type="entry name" value="Ribosome-binding factor A, RbfA"/>
    <property type="match status" value="1"/>
</dbReference>
<dbReference type="PROSITE" id="PS01319">
    <property type="entry name" value="RBFA"/>
    <property type="match status" value="1"/>
</dbReference>
<organism>
    <name type="scientific">Moorella thermoacetica (strain ATCC 39073 / JCM 9320)</name>
    <dbReference type="NCBI Taxonomy" id="264732"/>
    <lineage>
        <taxon>Bacteria</taxon>
        <taxon>Bacillati</taxon>
        <taxon>Bacillota</taxon>
        <taxon>Clostridia</taxon>
        <taxon>Moorellales</taxon>
        <taxon>Moorellaceae</taxon>
        <taxon>Moorella</taxon>
    </lineage>
</organism>
<gene>
    <name evidence="1" type="primary">rbfA</name>
    <name type="ordered locus">Moth_1051</name>
</gene>
<name>RBFA_MOOTA</name>
<accession>Q2RJM4</accession>
<reference key="1">
    <citation type="journal article" date="2008" name="Environ. Microbiol.">
        <title>The complete genome sequence of Moorella thermoacetica (f. Clostridium thermoaceticum).</title>
        <authorList>
            <person name="Pierce E."/>
            <person name="Xie G."/>
            <person name="Barabote R.D."/>
            <person name="Saunders E."/>
            <person name="Han C.S."/>
            <person name="Detter J.C."/>
            <person name="Richardson P."/>
            <person name="Brettin T.S."/>
            <person name="Das A."/>
            <person name="Ljungdahl L.G."/>
            <person name="Ragsdale S.W."/>
        </authorList>
    </citation>
    <scope>NUCLEOTIDE SEQUENCE [LARGE SCALE GENOMIC DNA]</scope>
    <source>
        <strain>ATCC 39073 / JCM 9320</strain>
    </source>
</reference>
<comment type="function">
    <text evidence="1">One of several proteins that assist in the late maturation steps of the functional core of the 30S ribosomal subunit. Associates with free 30S ribosomal subunits (but not with 30S subunits that are part of 70S ribosomes or polysomes). Required for efficient processing of 16S rRNA. May interact with the 5'-terminal helix region of 16S rRNA.</text>
</comment>
<comment type="subunit">
    <text evidence="1">Monomer. Binds 30S ribosomal subunits, but not 50S ribosomal subunits or 70S ribosomes.</text>
</comment>
<comment type="subcellular location">
    <subcellularLocation>
        <location evidence="1">Cytoplasm</location>
    </subcellularLocation>
</comment>
<comment type="similarity">
    <text evidence="1">Belongs to the RbfA family.</text>
</comment>
<feature type="chain" id="PRO_0000321231" description="Ribosome-binding factor A">
    <location>
        <begin position="1"/>
        <end position="122"/>
    </location>
</feature>
<keyword id="KW-0963">Cytoplasm</keyword>
<keyword id="KW-0690">Ribosome biogenesis</keyword>